<gene>
    <name evidence="1" type="primary">ygfZ</name>
    <name type="ordered locus">SG2943</name>
</gene>
<name>YGFZ_SALG2</name>
<protein>
    <recommendedName>
        <fullName evidence="1">tRNA-modifying protein YgfZ</fullName>
    </recommendedName>
</protein>
<comment type="function">
    <text evidence="1">Folate-binding protein involved in regulating the level of ATP-DnaA and in the modification of some tRNAs. It is probably a key factor in regulatory networks that act via tRNA modification, such as initiation of chromosomal replication.</text>
</comment>
<comment type="subcellular location">
    <subcellularLocation>
        <location evidence="1">Cytoplasm</location>
    </subcellularLocation>
</comment>
<comment type="similarity">
    <text evidence="1">Belongs to the tRNA-modifying YgfZ family.</text>
</comment>
<keyword id="KW-0963">Cytoplasm</keyword>
<keyword id="KW-0290">Folate-binding</keyword>
<keyword id="KW-0819">tRNA processing</keyword>
<evidence type="ECO:0000255" key="1">
    <source>
        <dbReference type="HAMAP-Rule" id="MF_01175"/>
    </source>
</evidence>
<accession>B5RE09</accession>
<sequence length="326" mass="36015">MAFISFPPRHPSSSARLPLTLIALDDWALSTITGVDSEKYIQGQVTADVSQMTEQQHLLAAHCDAKGKMWSTLRLFRERDGFAWIERRSVREAQLTELKKYAVFSKVVIAPDDERVLLGVAGFQARAALANVFSELPNSENQVVRDGASTLLWFEHPAERFLLVTDVATANMLTEKLHGEAELNNSQQWLALDIEAGIPVIDAANSGQFIPQATNLQALGGISFKKGCYTGQEMVARAKFRGANKRALWLLAGKASRVPEAGEDLELQMGENWRRTGAILAATQLDDGQLLVQAVMNNDLEAESVFRVRDDANTLHIVPLPYSLEE</sequence>
<dbReference type="EMBL" id="AM933173">
    <property type="protein sequence ID" value="CAR38748.1"/>
    <property type="molecule type" value="Genomic_DNA"/>
</dbReference>
<dbReference type="RefSeq" id="WP_000874176.1">
    <property type="nucleotide sequence ID" value="NC_011274.1"/>
</dbReference>
<dbReference type="SMR" id="B5RE09"/>
<dbReference type="KEGG" id="seg:SG2943"/>
<dbReference type="HOGENOM" id="CLU_007884_6_1_6"/>
<dbReference type="Proteomes" id="UP000008321">
    <property type="component" value="Chromosome"/>
</dbReference>
<dbReference type="GO" id="GO:0005737">
    <property type="term" value="C:cytoplasm"/>
    <property type="evidence" value="ECO:0007669"/>
    <property type="project" value="UniProtKB-SubCell"/>
</dbReference>
<dbReference type="GO" id="GO:0005542">
    <property type="term" value="F:folic acid binding"/>
    <property type="evidence" value="ECO:0007669"/>
    <property type="project" value="UniProtKB-UniRule"/>
</dbReference>
<dbReference type="GO" id="GO:0016226">
    <property type="term" value="P:iron-sulfur cluster assembly"/>
    <property type="evidence" value="ECO:0007669"/>
    <property type="project" value="TreeGrafter"/>
</dbReference>
<dbReference type="GO" id="GO:0009451">
    <property type="term" value="P:RNA modification"/>
    <property type="evidence" value="ECO:0007669"/>
    <property type="project" value="InterPro"/>
</dbReference>
<dbReference type="GO" id="GO:0008033">
    <property type="term" value="P:tRNA processing"/>
    <property type="evidence" value="ECO:0007669"/>
    <property type="project" value="UniProtKB-UniRule"/>
</dbReference>
<dbReference type="FunFam" id="2.40.30.160:FF:000001">
    <property type="entry name" value="tRNA-modifying protein YgfZ"/>
    <property type="match status" value="1"/>
</dbReference>
<dbReference type="FunFam" id="3.30.70.1400:FF:000002">
    <property type="entry name" value="tRNA-modifying protein YgfZ"/>
    <property type="match status" value="1"/>
</dbReference>
<dbReference type="FunFam" id="3.30.70.1630:FF:000001">
    <property type="entry name" value="tRNA-modifying protein YgfZ"/>
    <property type="match status" value="1"/>
</dbReference>
<dbReference type="Gene3D" id="2.40.30.160">
    <property type="match status" value="1"/>
</dbReference>
<dbReference type="Gene3D" id="3.30.70.1630">
    <property type="match status" value="1"/>
</dbReference>
<dbReference type="Gene3D" id="3.30.70.1400">
    <property type="entry name" value="Aminomethyltransferase beta-barrel domains"/>
    <property type="match status" value="1"/>
</dbReference>
<dbReference type="HAMAP" id="MF_01175">
    <property type="entry name" value="tRNA_modifying_YgfZ"/>
    <property type="match status" value="1"/>
</dbReference>
<dbReference type="InterPro" id="IPR006222">
    <property type="entry name" value="GCV_T_N"/>
</dbReference>
<dbReference type="InterPro" id="IPR029043">
    <property type="entry name" value="GcvT/YgfZ_C"/>
</dbReference>
<dbReference type="InterPro" id="IPR023758">
    <property type="entry name" value="tRNA-modifying_YgfZ"/>
</dbReference>
<dbReference type="InterPro" id="IPR045179">
    <property type="entry name" value="YgfZ/GcvT"/>
</dbReference>
<dbReference type="InterPro" id="IPR017703">
    <property type="entry name" value="YgfZ/GcvT_CS"/>
</dbReference>
<dbReference type="InterPro" id="IPR048451">
    <property type="entry name" value="YgfZ_barrel"/>
</dbReference>
<dbReference type="NCBIfam" id="NF007110">
    <property type="entry name" value="PRK09559.1"/>
    <property type="match status" value="1"/>
</dbReference>
<dbReference type="NCBIfam" id="TIGR03317">
    <property type="entry name" value="ygfZ_signature"/>
    <property type="match status" value="1"/>
</dbReference>
<dbReference type="PANTHER" id="PTHR22602">
    <property type="entry name" value="TRANSFERASE CAF17, MITOCHONDRIAL-RELATED"/>
    <property type="match status" value="1"/>
</dbReference>
<dbReference type="PANTHER" id="PTHR22602:SF0">
    <property type="entry name" value="TRANSFERASE CAF17, MITOCHONDRIAL-RELATED"/>
    <property type="match status" value="1"/>
</dbReference>
<dbReference type="Pfam" id="PF01571">
    <property type="entry name" value="GCV_T"/>
    <property type="match status" value="1"/>
</dbReference>
<dbReference type="Pfam" id="PF21130">
    <property type="entry name" value="YgfZ_barrel"/>
    <property type="match status" value="1"/>
</dbReference>
<dbReference type="SUPFAM" id="SSF101790">
    <property type="entry name" value="Aminomethyltransferase beta-barrel domain"/>
    <property type="match status" value="1"/>
</dbReference>
<dbReference type="SUPFAM" id="SSF103025">
    <property type="entry name" value="Folate-binding domain"/>
    <property type="match status" value="1"/>
</dbReference>
<organism>
    <name type="scientific">Salmonella gallinarum (strain 287/91 / NCTC 13346)</name>
    <dbReference type="NCBI Taxonomy" id="550538"/>
    <lineage>
        <taxon>Bacteria</taxon>
        <taxon>Pseudomonadati</taxon>
        <taxon>Pseudomonadota</taxon>
        <taxon>Gammaproteobacteria</taxon>
        <taxon>Enterobacterales</taxon>
        <taxon>Enterobacteriaceae</taxon>
        <taxon>Salmonella</taxon>
    </lineage>
</organism>
<feature type="chain" id="PRO_1000138082" description="tRNA-modifying protein YgfZ">
    <location>
        <begin position="1"/>
        <end position="326"/>
    </location>
</feature>
<feature type="binding site" evidence="1">
    <location>
        <position position="27"/>
    </location>
    <ligand>
        <name>folate</name>
        <dbReference type="ChEBI" id="CHEBI:62501"/>
    </ligand>
</feature>
<feature type="binding site" evidence="1">
    <location>
        <position position="189"/>
    </location>
    <ligand>
        <name>folate</name>
        <dbReference type="ChEBI" id="CHEBI:62501"/>
    </ligand>
</feature>
<reference key="1">
    <citation type="journal article" date="2008" name="Genome Res.">
        <title>Comparative genome analysis of Salmonella enteritidis PT4 and Salmonella gallinarum 287/91 provides insights into evolutionary and host adaptation pathways.</title>
        <authorList>
            <person name="Thomson N.R."/>
            <person name="Clayton D.J."/>
            <person name="Windhorst D."/>
            <person name="Vernikos G."/>
            <person name="Davidson S."/>
            <person name="Churcher C."/>
            <person name="Quail M.A."/>
            <person name="Stevens M."/>
            <person name="Jones M.A."/>
            <person name="Watson M."/>
            <person name="Barron A."/>
            <person name="Layton A."/>
            <person name="Pickard D."/>
            <person name="Kingsley R.A."/>
            <person name="Bignell A."/>
            <person name="Clark L."/>
            <person name="Harris B."/>
            <person name="Ormond D."/>
            <person name="Abdellah Z."/>
            <person name="Brooks K."/>
            <person name="Cherevach I."/>
            <person name="Chillingworth T."/>
            <person name="Woodward J."/>
            <person name="Norberczak H."/>
            <person name="Lord A."/>
            <person name="Arrowsmith C."/>
            <person name="Jagels K."/>
            <person name="Moule S."/>
            <person name="Mungall K."/>
            <person name="Saunders M."/>
            <person name="Whitehead S."/>
            <person name="Chabalgoity J.A."/>
            <person name="Maskell D."/>
            <person name="Humphreys T."/>
            <person name="Roberts M."/>
            <person name="Barrow P.A."/>
            <person name="Dougan G."/>
            <person name="Parkhill J."/>
        </authorList>
    </citation>
    <scope>NUCLEOTIDE SEQUENCE [LARGE SCALE GENOMIC DNA]</scope>
    <source>
        <strain>287/91 / NCTC 13346</strain>
    </source>
</reference>
<proteinExistence type="inferred from homology"/>